<protein>
    <recommendedName>
        <fullName evidence="1">Small ribosomal subunit protein uS19</fullName>
    </recommendedName>
    <alternativeName>
        <fullName evidence="2">30S ribosomal protein S19</fullName>
    </alternativeName>
</protein>
<evidence type="ECO:0000255" key="1">
    <source>
        <dbReference type="HAMAP-Rule" id="MF_00531"/>
    </source>
</evidence>
<evidence type="ECO:0000305" key="2"/>
<reference key="1">
    <citation type="journal article" date="2011" name="J. Bacteriol.">
        <title>Comparative genomics of 28 Salmonella enterica isolates: evidence for CRISPR-mediated adaptive sublineage evolution.</title>
        <authorList>
            <person name="Fricke W.F."/>
            <person name="Mammel M.K."/>
            <person name="McDermott P.F."/>
            <person name="Tartera C."/>
            <person name="White D.G."/>
            <person name="Leclerc J.E."/>
            <person name="Ravel J."/>
            <person name="Cebula T.A."/>
        </authorList>
    </citation>
    <scope>NUCLEOTIDE SEQUENCE [LARGE SCALE GENOMIC DNA]</scope>
    <source>
        <strain>SL254</strain>
    </source>
</reference>
<organism>
    <name type="scientific">Salmonella newport (strain SL254)</name>
    <dbReference type="NCBI Taxonomy" id="423368"/>
    <lineage>
        <taxon>Bacteria</taxon>
        <taxon>Pseudomonadati</taxon>
        <taxon>Pseudomonadota</taxon>
        <taxon>Gammaproteobacteria</taxon>
        <taxon>Enterobacterales</taxon>
        <taxon>Enterobacteriaceae</taxon>
        <taxon>Salmonella</taxon>
    </lineage>
</organism>
<dbReference type="EMBL" id="CP001113">
    <property type="protein sequence ID" value="ACF62262.1"/>
    <property type="molecule type" value="Genomic_DNA"/>
</dbReference>
<dbReference type="RefSeq" id="WP_001138115.1">
    <property type="nucleotide sequence ID" value="NZ_CCMR01000003.1"/>
</dbReference>
<dbReference type="SMR" id="B4SUT6"/>
<dbReference type="GeneID" id="97603665"/>
<dbReference type="KEGG" id="see:SNSL254_A3705"/>
<dbReference type="HOGENOM" id="CLU_144911_0_1_6"/>
<dbReference type="Proteomes" id="UP000008824">
    <property type="component" value="Chromosome"/>
</dbReference>
<dbReference type="GO" id="GO:0005737">
    <property type="term" value="C:cytoplasm"/>
    <property type="evidence" value="ECO:0007669"/>
    <property type="project" value="UniProtKB-ARBA"/>
</dbReference>
<dbReference type="GO" id="GO:0015935">
    <property type="term" value="C:small ribosomal subunit"/>
    <property type="evidence" value="ECO:0007669"/>
    <property type="project" value="InterPro"/>
</dbReference>
<dbReference type="GO" id="GO:0019843">
    <property type="term" value="F:rRNA binding"/>
    <property type="evidence" value="ECO:0007669"/>
    <property type="project" value="UniProtKB-UniRule"/>
</dbReference>
<dbReference type="GO" id="GO:0003735">
    <property type="term" value="F:structural constituent of ribosome"/>
    <property type="evidence" value="ECO:0007669"/>
    <property type="project" value="InterPro"/>
</dbReference>
<dbReference type="GO" id="GO:0000028">
    <property type="term" value="P:ribosomal small subunit assembly"/>
    <property type="evidence" value="ECO:0007669"/>
    <property type="project" value="TreeGrafter"/>
</dbReference>
<dbReference type="GO" id="GO:0006412">
    <property type="term" value="P:translation"/>
    <property type="evidence" value="ECO:0007669"/>
    <property type="project" value="UniProtKB-UniRule"/>
</dbReference>
<dbReference type="FunFam" id="3.30.860.10:FF:000001">
    <property type="entry name" value="30S ribosomal protein S19"/>
    <property type="match status" value="1"/>
</dbReference>
<dbReference type="Gene3D" id="3.30.860.10">
    <property type="entry name" value="30s Ribosomal Protein S19, Chain A"/>
    <property type="match status" value="1"/>
</dbReference>
<dbReference type="HAMAP" id="MF_00531">
    <property type="entry name" value="Ribosomal_uS19"/>
    <property type="match status" value="1"/>
</dbReference>
<dbReference type="InterPro" id="IPR002222">
    <property type="entry name" value="Ribosomal_uS19"/>
</dbReference>
<dbReference type="InterPro" id="IPR005732">
    <property type="entry name" value="Ribosomal_uS19_bac-type"/>
</dbReference>
<dbReference type="InterPro" id="IPR020934">
    <property type="entry name" value="Ribosomal_uS19_CS"/>
</dbReference>
<dbReference type="InterPro" id="IPR023575">
    <property type="entry name" value="Ribosomal_uS19_SF"/>
</dbReference>
<dbReference type="NCBIfam" id="TIGR01050">
    <property type="entry name" value="rpsS_bact"/>
    <property type="match status" value="1"/>
</dbReference>
<dbReference type="PANTHER" id="PTHR11880">
    <property type="entry name" value="RIBOSOMAL PROTEIN S19P FAMILY MEMBER"/>
    <property type="match status" value="1"/>
</dbReference>
<dbReference type="PANTHER" id="PTHR11880:SF8">
    <property type="entry name" value="SMALL RIBOSOMAL SUBUNIT PROTEIN US19M"/>
    <property type="match status" value="1"/>
</dbReference>
<dbReference type="Pfam" id="PF00203">
    <property type="entry name" value="Ribosomal_S19"/>
    <property type="match status" value="1"/>
</dbReference>
<dbReference type="PIRSF" id="PIRSF002144">
    <property type="entry name" value="Ribosomal_S19"/>
    <property type="match status" value="1"/>
</dbReference>
<dbReference type="PRINTS" id="PR00975">
    <property type="entry name" value="RIBOSOMALS19"/>
</dbReference>
<dbReference type="SUPFAM" id="SSF54570">
    <property type="entry name" value="Ribosomal protein S19"/>
    <property type="match status" value="1"/>
</dbReference>
<dbReference type="PROSITE" id="PS00323">
    <property type="entry name" value="RIBOSOMAL_S19"/>
    <property type="match status" value="1"/>
</dbReference>
<comment type="function">
    <text evidence="1">Protein S19 forms a complex with S13 that binds strongly to the 16S ribosomal RNA.</text>
</comment>
<comment type="similarity">
    <text evidence="1">Belongs to the universal ribosomal protein uS19 family.</text>
</comment>
<proteinExistence type="inferred from homology"/>
<feature type="chain" id="PRO_1000128033" description="Small ribosomal subunit protein uS19">
    <location>
        <begin position="1"/>
        <end position="92"/>
    </location>
</feature>
<keyword id="KW-0687">Ribonucleoprotein</keyword>
<keyword id="KW-0689">Ribosomal protein</keyword>
<keyword id="KW-0694">RNA-binding</keyword>
<keyword id="KW-0699">rRNA-binding</keyword>
<sequence length="92" mass="10416">MPRSLKKGPFIDLHLLKKVEKAVESGDKKPLRTWSRRSTIFPNMIGLTIAVHNGRQHVPVFVSDEMVGHKLGEFAPTRTYRGHAADKKAKKK</sequence>
<accession>B4SUT6</accession>
<gene>
    <name evidence="1" type="primary">rpsS</name>
    <name type="ordered locus">SNSL254_A3705</name>
</gene>
<name>RS19_SALNS</name>